<name>RUVB_CAUVC</name>
<organism>
    <name type="scientific">Caulobacter vibrioides (strain ATCC 19089 / CIP 103742 / CB 15)</name>
    <name type="common">Caulobacter crescentus</name>
    <dbReference type="NCBI Taxonomy" id="190650"/>
    <lineage>
        <taxon>Bacteria</taxon>
        <taxon>Pseudomonadati</taxon>
        <taxon>Pseudomonadota</taxon>
        <taxon>Alphaproteobacteria</taxon>
        <taxon>Caulobacterales</taxon>
        <taxon>Caulobacteraceae</taxon>
        <taxon>Caulobacter</taxon>
    </lineage>
</organism>
<dbReference type="EC" id="3.6.4.-" evidence="1"/>
<dbReference type="EMBL" id="AE005673">
    <property type="protein sequence ID" value="AAK25198.1"/>
    <property type="molecule type" value="Genomic_DNA"/>
</dbReference>
<dbReference type="PIR" id="B87650">
    <property type="entry name" value="B87650"/>
</dbReference>
<dbReference type="RefSeq" id="NP_422030.1">
    <property type="nucleotide sequence ID" value="NC_002696.2"/>
</dbReference>
<dbReference type="RefSeq" id="WP_010921069.1">
    <property type="nucleotide sequence ID" value="NC_002696.2"/>
</dbReference>
<dbReference type="SMR" id="Q9A3G8"/>
<dbReference type="STRING" id="190650.CC_3236"/>
<dbReference type="EnsemblBacteria" id="AAK25198">
    <property type="protein sequence ID" value="AAK25198"/>
    <property type="gene ID" value="CC_3236"/>
</dbReference>
<dbReference type="KEGG" id="ccr:CC_3236"/>
<dbReference type="PATRIC" id="fig|190650.5.peg.3242"/>
<dbReference type="eggNOG" id="COG2255">
    <property type="taxonomic scope" value="Bacteria"/>
</dbReference>
<dbReference type="HOGENOM" id="CLU_055599_1_0_5"/>
<dbReference type="BioCyc" id="CAULO:CC3236-MONOMER"/>
<dbReference type="Proteomes" id="UP000001816">
    <property type="component" value="Chromosome"/>
</dbReference>
<dbReference type="GO" id="GO:0005737">
    <property type="term" value="C:cytoplasm"/>
    <property type="evidence" value="ECO:0007669"/>
    <property type="project" value="UniProtKB-SubCell"/>
</dbReference>
<dbReference type="GO" id="GO:0048476">
    <property type="term" value="C:Holliday junction resolvase complex"/>
    <property type="evidence" value="ECO:0007669"/>
    <property type="project" value="UniProtKB-UniRule"/>
</dbReference>
<dbReference type="GO" id="GO:0005524">
    <property type="term" value="F:ATP binding"/>
    <property type="evidence" value="ECO:0007669"/>
    <property type="project" value="UniProtKB-UniRule"/>
</dbReference>
<dbReference type="GO" id="GO:0016887">
    <property type="term" value="F:ATP hydrolysis activity"/>
    <property type="evidence" value="ECO:0007669"/>
    <property type="project" value="InterPro"/>
</dbReference>
<dbReference type="GO" id="GO:0000400">
    <property type="term" value="F:four-way junction DNA binding"/>
    <property type="evidence" value="ECO:0007669"/>
    <property type="project" value="UniProtKB-UniRule"/>
</dbReference>
<dbReference type="GO" id="GO:0009378">
    <property type="term" value="F:four-way junction helicase activity"/>
    <property type="evidence" value="ECO:0007669"/>
    <property type="project" value="InterPro"/>
</dbReference>
<dbReference type="GO" id="GO:0006310">
    <property type="term" value="P:DNA recombination"/>
    <property type="evidence" value="ECO:0007669"/>
    <property type="project" value="UniProtKB-UniRule"/>
</dbReference>
<dbReference type="GO" id="GO:0006281">
    <property type="term" value="P:DNA repair"/>
    <property type="evidence" value="ECO:0007669"/>
    <property type="project" value="UniProtKB-UniRule"/>
</dbReference>
<dbReference type="GO" id="GO:0009432">
    <property type="term" value="P:SOS response"/>
    <property type="evidence" value="ECO:0000269"/>
    <property type="project" value="CollecTF"/>
</dbReference>
<dbReference type="CDD" id="cd00009">
    <property type="entry name" value="AAA"/>
    <property type="match status" value="1"/>
</dbReference>
<dbReference type="FunFam" id="1.10.10.10:FF:000086">
    <property type="entry name" value="Holliday junction ATP-dependent DNA helicase RuvB"/>
    <property type="match status" value="1"/>
</dbReference>
<dbReference type="FunFam" id="3.40.50.300:FF:000073">
    <property type="entry name" value="Holliday junction ATP-dependent DNA helicase RuvB"/>
    <property type="match status" value="1"/>
</dbReference>
<dbReference type="Gene3D" id="1.10.8.60">
    <property type="match status" value="1"/>
</dbReference>
<dbReference type="Gene3D" id="3.40.50.300">
    <property type="entry name" value="P-loop containing nucleotide triphosphate hydrolases"/>
    <property type="match status" value="1"/>
</dbReference>
<dbReference type="Gene3D" id="1.10.10.10">
    <property type="entry name" value="Winged helix-like DNA-binding domain superfamily/Winged helix DNA-binding domain"/>
    <property type="match status" value="1"/>
</dbReference>
<dbReference type="HAMAP" id="MF_00016">
    <property type="entry name" value="DNA_HJ_migration_RuvB"/>
    <property type="match status" value="1"/>
</dbReference>
<dbReference type="InterPro" id="IPR003593">
    <property type="entry name" value="AAA+_ATPase"/>
</dbReference>
<dbReference type="InterPro" id="IPR041445">
    <property type="entry name" value="AAA_lid_4"/>
</dbReference>
<dbReference type="InterPro" id="IPR004605">
    <property type="entry name" value="DNA_helicase_Holl-junc_RuvB"/>
</dbReference>
<dbReference type="InterPro" id="IPR027417">
    <property type="entry name" value="P-loop_NTPase"/>
</dbReference>
<dbReference type="InterPro" id="IPR008824">
    <property type="entry name" value="RuvB-like_N"/>
</dbReference>
<dbReference type="InterPro" id="IPR008823">
    <property type="entry name" value="RuvB_C"/>
</dbReference>
<dbReference type="InterPro" id="IPR036388">
    <property type="entry name" value="WH-like_DNA-bd_sf"/>
</dbReference>
<dbReference type="InterPro" id="IPR036390">
    <property type="entry name" value="WH_DNA-bd_sf"/>
</dbReference>
<dbReference type="NCBIfam" id="NF000868">
    <property type="entry name" value="PRK00080.1"/>
    <property type="match status" value="1"/>
</dbReference>
<dbReference type="NCBIfam" id="TIGR00635">
    <property type="entry name" value="ruvB"/>
    <property type="match status" value="1"/>
</dbReference>
<dbReference type="PANTHER" id="PTHR42848">
    <property type="match status" value="1"/>
</dbReference>
<dbReference type="PANTHER" id="PTHR42848:SF1">
    <property type="entry name" value="HOLLIDAY JUNCTION BRANCH MIGRATION COMPLEX SUBUNIT RUVB"/>
    <property type="match status" value="1"/>
</dbReference>
<dbReference type="Pfam" id="PF17864">
    <property type="entry name" value="AAA_lid_4"/>
    <property type="match status" value="1"/>
</dbReference>
<dbReference type="Pfam" id="PF05491">
    <property type="entry name" value="RuvB_C"/>
    <property type="match status" value="1"/>
</dbReference>
<dbReference type="Pfam" id="PF05496">
    <property type="entry name" value="RuvB_N"/>
    <property type="match status" value="1"/>
</dbReference>
<dbReference type="SMART" id="SM00382">
    <property type="entry name" value="AAA"/>
    <property type="match status" value="1"/>
</dbReference>
<dbReference type="SUPFAM" id="SSF52540">
    <property type="entry name" value="P-loop containing nucleoside triphosphate hydrolases"/>
    <property type="match status" value="1"/>
</dbReference>
<dbReference type="SUPFAM" id="SSF46785">
    <property type="entry name" value="Winged helix' DNA-binding domain"/>
    <property type="match status" value="1"/>
</dbReference>
<reference key="1">
    <citation type="journal article" date="2001" name="Proc. Natl. Acad. Sci. U.S.A.">
        <title>Complete genome sequence of Caulobacter crescentus.</title>
        <authorList>
            <person name="Nierman W.C."/>
            <person name="Feldblyum T.V."/>
            <person name="Laub M.T."/>
            <person name="Paulsen I.T."/>
            <person name="Nelson K.E."/>
            <person name="Eisen J.A."/>
            <person name="Heidelberg J.F."/>
            <person name="Alley M.R.K."/>
            <person name="Ohta N."/>
            <person name="Maddock J.R."/>
            <person name="Potocka I."/>
            <person name="Nelson W.C."/>
            <person name="Newton A."/>
            <person name="Stephens C."/>
            <person name="Phadke N.D."/>
            <person name="Ely B."/>
            <person name="DeBoy R.T."/>
            <person name="Dodson R.J."/>
            <person name="Durkin A.S."/>
            <person name="Gwinn M.L."/>
            <person name="Haft D.H."/>
            <person name="Kolonay J.F."/>
            <person name="Smit J."/>
            <person name="Craven M.B."/>
            <person name="Khouri H.M."/>
            <person name="Shetty J."/>
            <person name="Berry K.J."/>
            <person name="Utterback T.R."/>
            <person name="Tran K."/>
            <person name="Wolf A.M."/>
            <person name="Vamathevan J.J."/>
            <person name="Ermolaeva M.D."/>
            <person name="White O."/>
            <person name="Salzberg S.L."/>
            <person name="Venter J.C."/>
            <person name="Shapiro L."/>
            <person name="Fraser C.M."/>
        </authorList>
    </citation>
    <scope>NUCLEOTIDE SEQUENCE [LARGE SCALE GENOMIC DNA]</scope>
    <source>
        <strain>ATCC 19089 / CIP 103742 / CB 15</strain>
    </source>
</reference>
<sequence>MTRVISGEPQHGDLAPADRALRPQTLAEFVGQEQAKGNLRVFIEAAKGRGEALDHVLLFGPPGLGKTTLAQIVARELGVNFRATSGPVLNKPGDLAAILTNLEANDVLFIDEIHRLSSNVEEILYPAMEDHVLDLVIGEGPSARSIRIDLAPFTLVAATTRAGMLATPLRDRFGIPIRLEFYTPAELRHVLQHAARKMGAPLTDDGADEIAKRARGTPRVAGRLLRRVRDFATADGADRIDRKAAAMALARLEVDESGLDSLDRRYLRAMIENYGGGPVGVETIAYAIAEARDAVEDVIEPYLMQQGFIQRTPRGRMACGKAYLHLGLTPPAAPPGQAQGALFDEG</sequence>
<gene>
    <name evidence="1" type="primary">ruvB</name>
    <name type="ordered locus">CC_3236</name>
</gene>
<keyword id="KW-0067">ATP-binding</keyword>
<keyword id="KW-0963">Cytoplasm</keyword>
<keyword id="KW-0227">DNA damage</keyword>
<keyword id="KW-0233">DNA recombination</keyword>
<keyword id="KW-0234">DNA repair</keyword>
<keyword id="KW-0238">DNA-binding</keyword>
<keyword id="KW-0378">Hydrolase</keyword>
<keyword id="KW-0547">Nucleotide-binding</keyword>
<keyword id="KW-1185">Reference proteome</keyword>
<evidence type="ECO:0000255" key="1">
    <source>
        <dbReference type="HAMAP-Rule" id="MF_00016"/>
    </source>
</evidence>
<feature type="chain" id="PRO_0000165512" description="Holliday junction branch migration complex subunit RuvB">
    <location>
        <begin position="1"/>
        <end position="346"/>
    </location>
</feature>
<feature type="region of interest" description="Large ATPase domain (RuvB-L)" evidence="1">
    <location>
        <begin position="1"/>
        <end position="182"/>
    </location>
</feature>
<feature type="region of interest" description="Small ATPAse domain (RuvB-S)" evidence="1">
    <location>
        <begin position="183"/>
        <end position="253"/>
    </location>
</feature>
<feature type="region of interest" description="Head domain (RuvB-H)" evidence="1">
    <location>
        <begin position="256"/>
        <end position="346"/>
    </location>
</feature>
<feature type="binding site" evidence="1">
    <location>
        <position position="21"/>
    </location>
    <ligand>
        <name>ATP</name>
        <dbReference type="ChEBI" id="CHEBI:30616"/>
    </ligand>
</feature>
<feature type="binding site" evidence="1">
    <location>
        <position position="22"/>
    </location>
    <ligand>
        <name>ATP</name>
        <dbReference type="ChEBI" id="CHEBI:30616"/>
    </ligand>
</feature>
<feature type="binding site" evidence="1">
    <location>
        <position position="63"/>
    </location>
    <ligand>
        <name>ATP</name>
        <dbReference type="ChEBI" id="CHEBI:30616"/>
    </ligand>
</feature>
<feature type="binding site" evidence="1">
    <location>
        <position position="66"/>
    </location>
    <ligand>
        <name>ATP</name>
        <dbReference type="ChEBI" id="CHEBI:30616"/>
    </ligand>
</feature>
<feature type="binding site" evidence="1">
    <location>
        <position position="67"/>
    </location>
    <ligand>
        <name>ATP</name>
        <dbReference type="ChEBI" id="CHEBI:30616"/>
    </ligand>
</feature>
<feature type="binding site" evidence="1">
    <location>
        <position position="67"/>
    </location>
    <ligand>
        <name>Mg(2+)</name>
        <dbReference type="ChEBI" id="CHEBI:18420"/>
    </ligand>
</feature>
<feature type="binding site" evidence="1">
    <location>
        <position position="68"/>
    </location>
    <ligand>
        <name>ATP</name>
        <dbReference type="ChEBI" id="CHEBI:30616"/>
    </ligand>
</feature>
<feature type="binding site" evidence="1">
    <location>
        <position position="172"/>
    </location>
    <ligand>
        <name>ATP</name>
        <dbReference type="ChEBI" id="CHEBI:30616"/>
    </ligand>
</feature>
<feature type="binding site" evidence="1">
    <location>
        <position position="182"/>
    </location>
    <ligand>
        <name>ATP</name>
        <dbReference type="ChEBI" id="CHEBI:30616"/>
    </ligand>
</feature>
<feature type="binding site" evidence="1">
    <location>
        <position position="219"/>
    </location>
    <ligand>
        <name>ATP</name>
        <dbReference type="ChEBI" id="CHEBI:30616"/>
    </ligand>
</feature>
<feature type="binding site" evidence="1">
    <location>
        <position position="292"/>
    </location>
    <ligand>
        <name>DNA</name>
        <dbReference type="ChEBI" id="CHEBI:16991"/>
    </ligand>
</feature>
<feature type="binding site" evidence="1">
    <location>
        <position position="311"/>
    </location>
    <ligand>
        <name>DNA</name>
        <dbReference type="ChEBI" id="CHEBI:16991"/>
    </ligand>
</feature>
<feature type="binding site" evidence="1">
    <location>
        <position position="316"/>
    </location>
    <ligand>
        <name>DNA</name>
        <dbReference type="ChEBI" id="CHEBI:16991"/>
    </ligand>
</feature>
<protein>
    <recommendedName>
        <fullName evidence="1">Holliday junction branch migration complex subunit RuvB</fullName>
        <ecNumber evidence="1">3.6.4.-</ecNumber>
    </recommendedName>
</protein>
<comment type="function">
    <text evidence="1">The RuvA-RuvB-RuvC complex processes Holliday junction (HJ) DNA during genetic recombination and DNA repair, while the RuvA-RuvB complex plays an important role in the rescue of blocked DNA replication forks via replication fork reversal (RFR). RuvA specifically binds to HJ cruciform DNA, conferring on it an open structure. The RuvB hexamer acts as an ATP-dependent pump, pulling dsDNA into and through the RuvAB complex. RuvB forms 2 homohexamers on either side of HJ DNA bound by 1 or 2 RuvA tetramers; 4 subunits per hexamer contact DNA at a time. Coordinated motions by a converter formed by DNA-disengaged RuvB subunits stimulates ATP hydrolysis and nucleotide exchange. Immobilization of the converter enables RuvB to convert the ATP-contained energy into a lever motion, pulling 2 nucleotides of DNA out of the RuvA tetramer per ATP hydrolyzed, thus driving DNA branch migration. The RuvB motors rotate together with the DNA substrate, which together with the progressing nucleotide cycle form the mechanistic basis for DNA recombination by continuous HJ branch migration. Branch migration allows RuvC to scan DNA until it finds its consensus sequence, where it cleaves and resolves cruciform DNA.</text>
</comment>
<comment type="catalytic activity">
    <reaction evidence="1">
        <text>ATP + H2O = ADP + phosphate + H(+)</text>
        <dbReference type="Rhea" id="RHEA:13065"/>
        <dbReference type="ChEBI" id="CHEBI:15377"/>
        <dbReference type="ChEBI" id="CHEBI:15378"/>
        <dbReference type="ChEBI" id="CHEBI:30616"/>
        <dbReference type="ChEBI" id="CHEBI:43474"/>
        <dbReference type="ChEBI" id="CHEBI:456216"/>
    </reaction>
</comment>
<comment type="subunit">
    <text evidence="1">Homohexamer. Forms an RuvA(8)-RuvB(12)-Holliday junction (HJ) complex. HJ DNA is sandwiched between 2 RuvA tetramers; dsDNA enters through RuvA and exits via RuvB. An RuvB hexamer assembles on each DNA strand where it exits the tetramer. Each RuvB hexamer is contacted by two RuvA subunits (via domain III) on 2 adjacent RuvB subunits; this complex drives branch migration. In the full resolvosome a probable DNA-RuvA(4)-RuvB(12)-RuvC(2) complex forms which resolves the HJ.</text>
</comment>
<comment type="subcellular location">
    <subcellularLocation>
        <location evidence="1">Cytoplasm</location>
    </subcellularLocation>
</comment>
<comment type="domain">
    <text evidence="1">Has 3 domains, the large (RuvB-L) and small ATPase (RuvB-S) domains and the C-terminal head (RuvB-H) domain. The head domain binds DNA, while the ATPase domains jointly bind ATP, ADP or are empty depending on the state of the subunit in the translocation cycle. During a single DNA translocation step the structure of each domain remains the same, but their relative positions change.</text>
</comment>
<comment type="similarity">
    <text evidence="1">Belongs to the RuvB family.</text>
</comment>
<proteinExistence type="inferred from homology"/>
<accession>Q9A3G8</accession>